<accession>B9JXV7</accession>
<comment type="function">
    <text evidence="1">The alpha subunit is responsible for the aldol cleavage of indoleglycerol phosphate to indole and glyceraldehyde 3-phosphate.</text>
</comment>
<comment type="catalytic activity">
    <reaction evidence="1">
        <text>(1S,2R)-1-C-(indol-3-yl)glycerol 3-phosphate + L-serine = D-glyceraldehyde 3-phosphate + L-tryptophan + H2O</text>
        <dbReference type="Rhea" id="RHEA:10532"/>
        <dbReference type="ChEBI" id="CHEBI:15377"/>
        <dbReference type="ChEBI" id="CHEBI:33384"/>
        <dbReference type="ChEBI" id="CHEBI:57912"/>
        <dbReference type="ChEBI" id="CHEBI:58866"/>
        <dbReference type="ChEBI" id="CHEBI:59776"/>
        <dbReference type="EC" id="4.2.1.20"/>
    </reaction>
</comment>
<comment type="pathway">
    <text evidence="1">Amino-acid biosynthesis; L-tryptophan biosynthesis; L-tryptophan from chorismate: step 5/5.</text>
</comment>
<comment type="subunit">
    <text evidence="1">Tetramer of two alpha and two beta chains.</text>
</comment>
<comment type="similarity">
    <text evidence="1">Belongs to the TrpA family.</text>
</comment>
<proteinExistence type="inferred from homology"/>
<protein>
    <recommendedName>
        <fullName evidence="1">Tryptophan synthase alpha chain</fullName>
        <ecNumber evidence="1">4.2.1.20</ecNumber>
    </recommendedName>
</protein>
<gene>
    <name evidence="1" type="primary">trpA</name>
    <name type="ordered locus">Avi_0021</name>
</gene>
<reference key="1">
    <citation type="journal article" date="2009" name="J. Bacteriol.">
        <title>Genome sequences of three Agrobacterium biovars help elucidate the evolution of multichromosome genomes in bacteria.</title>
        <authorList>
            <person name="Slater S.C."/>
            <person name="Goldman B.S."/>
            <person name="Goodner B."/>
            <person name="Setubal J.C."/>
            <person name="Farrand S.K."/>
            <person name="Nester E.W."/>
            <person name="Burr T.J."/>
            <person name="Banta L."/>
            <person name="Dickerman A.W."/>
            <person name="Paulsen I."/>
            <person name="Otten L."/>
            <person name="Suen G."/>
            <person name="Welch R."/>
            <person name="Almeida N.F."/>
            <person name="Arnold F."/>
            <person name="Burton O.T."/>
            <person name="Du Z."/>
            <person name="Ewing A."/>
            <person name="Godsy E."/>
            <person name="Heisel S."/>
            <person name="Houmiel K.L."/>
            <person name="Jhaveri J."/>
            <person name="Lu J."/>
            <person name="Miller N.M."/>
            <person name="Norton S."/>
            <person name="Chen Q."/>
            <person name="Phoolcharoen W."/>
            <person name="Ohlin V."/>
            <person name="Ondrusek D."/>
            <person name="Pride N."/>
            <person name="Stricklin S.L."/>
            <person name="Sun J."/>
            <person name="Wheeler C."/>
            <person name="Wilson L."/>
            <person name="Zhu H."/>
            <person name="Wood D.W."/>
        </authorList>
    </citation>
    <scope>NUCLEOTIDE SEQUENCE [LARGE SCALE GENOMIC DNA]</scope>
    <source>
        <strain>ATCC BAA-846 / DSM 112012 / S4</strain>
    </source>
</reference>
<name>TRPA_ALLAM</name>
<feature type="chain" id="PRO_1000198696" description="Tryptophan synthase alpha chain">
    <location>
        <begin position="1"/>
        <end position="279"/>
    </location>
</feature>
<feature type="active site" description="Proton acceptor" evidence="1">
    <location>
        <position position="50"/>
    </location>
</feature>
<feature type="active site" description="Proton acceptor" evidence="1">
    <location>
        <position position="61"/>
    </location>
</feature>
<keyword id="KW-0028">Amino-acid biosynthesis</keyword>
<keyword id="KW-0057">Aromatic amino acid biosynthesis</keyword>
<keyword id="KW-0456">Lyase</keyword>
<keyword id="KW-1185">Reference proteome</keyword>
<keyword id="KW-0822">Tryptophan biosynthesis</keyword>
<dbReference type="EC" id="4.2.1.20" evidence="1"/>
<dbReference type="EMBL" id="CP000633">
    <property type="protein sequence ID" value="ACM34987.1"/>
    <property type="molecule type" value="Genomic_DNA"/>
</dbReference>
<dbReference type="RefSeq" id="WP_012654517.1">
    <property type="nucleotide sequence ID" value="NC_011989.1"/>
</dbReference>
<dbReference type="SMR" id="B9JXV7"/>
<dbReference type="STRING" id="311402.Avi_0021"/>
<dbReference type="KEGG" id="avi:Avi_0021"/>
<dbReference type="eggNOG" id="COG0159">
    <property type="taxonomic scope" value="Bacteria"/>
</dbReference>
<dbReference type="HOGENOM" id="CLU_016734_0_0_5"/>
<dbReference type="UniPathway" id="UPA00035">
    <property type="reaction ID" value="UER00044"/>
</dbReference>
<dbReference type="Proteomes" id="UP000001596">
    <property type="component" value="Chromosome 1"/>
</dbReference>
<dbReference type="GO" id="GO:0005829">
    <property type="term" value="C:cytosol"/>
    <property type="evidence" value="ECO:0007669"/>
    <property type="project" value="TreeGrafter"/>
</dbReference>
<dbReference type="GO" id="GO:0004834">
    <property type="term" value="F:tryptophan synthase activity"/>
    <property type="evidence" value="ECO:0007669"/>
    <property type="project" value="UniProtKB-UniRule"/>
</dbReference>
<dbReference type="CDD" id="cd04724">
    <property type="entry name" value="Tryptophan_synthase_alpha"/>
    <property type="match status" value="1"/>
</dbReference>
<dbReference type="FunFam" id="3.20.20.70:FF:000037">
    <property type="entry name" value="Tryptophan synthase alpha chain"/>
    <property type="match status" value="1"/>
</dbReference>
<dbReference type="Gene3D" id="3.20.20.70">
    <property type="entry name" value="Aldolase class I"/>
    <property type="match status" value="1"/>
</dbReference>
<dbReference type="HAMAP" id="MF_00131">
    <property type="entry name" value="Trp_synth_alpha"/>
    <property type="match status" value="1"/>
</dbReference>
<dbReference type="InterPro" id="IPR013785">
    <property type="entry name" value="Aldolase_TIM"/>
</dbReference>
<dbReference type="InterPro" id="IPR011060">
    <property type="entry name" value="RibuloseP-bd_barrel"/>
</dbReference>
<dbReference type="InterPro" id="IPR018204">
    <property type="entry name" value="Trp_synthase_alpha_AS"/>
</dbReference>
<dbReference type="InterPro" id="IPR002028">
    <property type="entry name" value="Trp_synthase_suA"/>
</dbReference>
<dbReference type="NCBIfam" id="TIGR00262">
    <property type="entry name" value="trpA"/>
    <property type="match status" value="1"/>
</dbReference>
<dbReference type="PANTHER" id="PTHR43406:SF1">
    <property type="entry name" value="TRYPTOPHAN SYNTHASE ALPHA CHAIN, CHLOROPLASTIC"/>
    <property type="match status" value="1"/>
</dbReference>
<dbReference type="PANTHER" id="PTHR43406">
    <property type="entry name" value="TRYPTOPHAN SYNTHASE, ALPHA CHAIN"/>
    <property type="match status" value="1"/>
</dbReference>
<dbReference type="Pfam" id="PF00290">
    <property type="entry name" value="Trp_syntA"/>
    <property type="match status" value="1"/>
</dbReference>
<dbReference type="SUPFAM" id="SSF51366">
    <property type="entry name" value="Ribulose-phoshate binding barrel"/>
    <property type="match status" value="1"/>
</dbReference>
<dbReference type="PROSITE" id="PS00167">
    <property type="entry name" value="TRP_SYNTHASE_ALPHA"/>
    <property type="match status" value="1"/>
</dbReference>
<evidence type="ECO:0000255" key="1">
    <source>
        <dbReference type="HAMAP-Rule" id="MF_00131"/>
    </source>
</evidence>
<organism>
    <name type="scientific">Allorhizobium ampelinum (strain ATCC BAA-846 / DSM 112012 / S4)</name>
    <name type="common">Agrobacterium vitis (strain S4)</name>
    <dbReference type="NCBI Taxonomy" id="311402"/>
    <lineage>
        <taxon>Bacteria</taxon>
        <taxon>Pseudomonadati</taxon>
        <taxon>Pseudomonadota</taxon>
        <taxon>Alphaproteobacteria</taxon>
        <taxon>Hyphomicrobiales</taxon>
        <taxon>Rhizobiaceae</taxon>
        <taxon>Rhizobium/Agrobacterium group</taxon>
        <taxon>Allorhizobium</taxon>
        <taxon>Allorhizobium ampelinum</taxon>
    </lineage>
</organism>
<sequence>MTQRMDKRFADLKEEGRPALVTYFMGGDPDFETSLAIMKALPQAGADVIELGMPFSDPMADGPAIQMAGQRALKAGQTLVKTLDMAREFRKGDQATPIVMMGYYNPIYVYGVEKFLDDALDAGIDGLIVVDLPPEMDDELCLPARKRDINFIRLATPTTDEKRLPMVLQNTSGFVYYVSMNGITGSALPDPSKVAGAVGRIKAHTDLPICVGFGVKTAEHARLIGASADGVVVGTAIVNQVALSLTKDDKATADTVQSVVTLVRGLASGVQTARLAAAQ</sequence>